<evidence type="ECO:0000255" key="1">
    <source>
        <dbReference type="HAMAP-Rule" id="MF_00198"/>
    </source>
</evidence>
<feature type="chain" id="PRO_1000124444" description="Polyamine aminopropyltransferase">
    <location>
        <begin position="1"/>
        <end position="285"/>
    </location>
</feature>
<feature type="domain" description="PABS" evidence="1">
    <location>
        <begin position="2"/>
        <end position="237"/>
    </location>
</feature>
<feature type="active site" description="Proton acceptor" evidence="1">
    <location>
        <position position="155"/>
    </location>
</feature>
<feature type="binding site" evidence="1">
    <location>
        <position position="31"/>
    </location>
    <ligand>
        <name>S-methyl-5'-thioadenosine</name>
        <dbReference type="ChEBI" id="CHEBI:17509"/>
    </ligand>
</feature>
<feature type="binding site" evidence="1">
    <location>
        <position position="86"/>
    </location>
    <ligand>
        <name>spermidine</name>
        <dbReference type="ChEBI" id="CHEBI:57834"/>
    </ligand>
</feature>
<feature type="binding site" evidence="1">
    <location>
        <position position="106"/>
    </location>
    <ligand>
        <name>S-methyl-5'-thioadenosine</name>
        <dbReference type="ChEBI" id="CHEBI:17509"/>
    </ligand>
</feature>
<feature type="binding site" evidence="1">
    <location>
        <begin position="137"/>
        <end position="138"/>
    </location>
    <ligand>
        <name>S-methyl-5'-thioadenosine</name>
        <dbReference type="ChEBI" id="CHEBI:17509"/>
    </ligand>
</feature>
<gene>
    <name evidence="1" type="primary">speE</name>
    <name type="ordered locus">SUB1320</name>
</gene>
<protein>
    <recommendedName>
        <fullName evidence="1">Polyamine aminopropyltransferase</fullName>
    </recommendedName>
    <alternativeName>
        <fullName evidence="1">Putrescine aminopropyltransferase</fullName>
        <shortName evidence="1">PAPT</shortName>
    </alternativeName>
    <alternativeName>
        <fullName evidence="1">Spermidine synthase</fullName>
        <shortName evidence="1">SPDS</shortName>
        <shortName evidence="1">SPDSY</shortName>
        <ecNumber evidence="1">2.5.1.16</ecNumber>
    </alternativeName>
</protein>
<reference key="1">
    <citation type="journal article" date="2009" name="BMC Genomics">
        <title>Evidence for niche adaptation in the genome of the bovine pathogen Streptococcus uberis.</title>
        <authorList>
            <person name="Ward P.N."/>
            <person name="Holden M.T.G."/>
            <person name="Leigh J.A."/>
            <person name="Lennard N."/>
            <person name="Bignell A."/>
            <person name="Barron A."/>
            <person name="Clark L."/>
            <person name="Quail M.A."/>
            <person name="Woodward J."/>
            <person name="Barrell B.G."/>
            <person name="Egan S.A."/>
            <person name="Field T.R."/>
            <person name="Maskell D."/>
            <person name="Kehoe M."/>
            <person name="Dowson C.G."/>
            <person name="Chanter N."/>
            <person name="Whatmore A.M."/>
            <person name="Bentley S.D."/>
            <person name="Parkhill J."/>
        </authorList>
    </citation>
    <scope>NUCLEOTIDE SEQUENCE [LARGE SCALE GENOMIC DNA]</scope>
    <source>
        <strain>ATCC BAA-854 / 0140J</strain>
    </source>
</reference>
<sequence>MDLWFSESHTPDVKLSVRTEEQLFVGKSEWQDISVINTPSFGKMLILNGHVLFSDADNFVYNEMVVHVPMAVHPNPEKVLIIGGGDGGVAQVLELYPDIKQIDIVEPDEMLVDVCRQYFPEFASGLDDDRVTIYHQDGLRFLRNCDSDYDIIINDATDPFGHTEGLFTKEFYGNSYRALKEDGIMIYQHGSPFFDEDESAFRSMHRKASQSFPISRVFQAHIPTVPSGYWCFGFASKKYHPIEDFKKEDWKARQLKTDYYSANLHLGAFSLPRYVEDILEEEEEK</sequence>
<name>SPEE_STRU0</name>
<dbReference type="EC" id="2.5.1.16" evidence="1"/>
<dbReference type="EMBL" id="AM946015">
    <property type="protein sequence ID" value="CAR42870.1"/>
    <property type="molecule type" value="Genomic_DNA"/>
</dbReference>
<dbReference type="RefSeq" id="WP_015911646.1">
    <property type="nucleotide sequence ID" value="NC_012004.1"/>
</dbReference>
<dbReference type="SMR" id="B9DUY3"/>
<dbReference type="STRING" id="218495.SUB1320"/>
<dbReference type="KEGG" id="sub:SUB1320"/>
<dbReference type="eggNOG" id="COG0421">
    <property type="taxonomic scope" value="Bacteria"/>
</dbReference>
<dbReference type="HOGENOM" id="CLU_048199_1_0_9"/>
<dbReference type="OrthoDB" id="9793120at2"/>
<dbReference type="UniPathway" id="UPA00248">
    <property type="reaction ID" value="UER00314"/>
</dbReference>
<dbReference type="Proteomes" id="UP000000449">
    <property type="component" value="Chromosome"/>
</dbReference>
<dbReference type="GO" id="GO:0005829">
    <property type="term" value="C:cytosol"/>
    <property type="evidence" value="ECO:0007669"/>
    <property type="project" value="TreeGrafter"/>
</dbReference>
<dbReference type="GO" id="GO:0004766">
    <property type="term" value="F:spermidine synthase activity"/>
    <property type="evidence" value="ECO:0007669"/>
    <property type="project" value="UniProtKB-UniRule"/>
</dbReference>
<dbReference type="GO" id="GO:0008295">
    <property type="term" value="P:spermidine biosynthetic process"/>
    <property type="evidence" value="ECO:0007669"/>
    <property type="project" value="UniProtKB-UniRule"/>
</dbReference>
<dbReference type="CDD" id="cd02440">
    <property type="entry name" value="AdoMet_MTases"/>
    <property type="match status" value="1"/>
</dbReference>
<dbReference type="Gene3D" id="2.30.140.10">
    <property type="entry name" value="Spermidine synthase, tetramerisation domain"/>
    <property type="match status" value="1"/>
</dbReference>
<dbReference type="Gene3D" id="3.40.50.150">
    <property type="entry name" value="Vaccinia Virus protein VP39"/>
    <property type="match status" value="1"/>
</dbReference>
<dbReference type="HAMAP" id="MF_00198">
    <property type="entry name" value="Spermidine_synth"/>
    <property type="match status" value="1"/>
</dbReference>
<dbReference type="InterPro" id="IPR030374">
    <property type="entry name" value="PABS"/>
</dbReference>
<dbReference type="InterPro" id="IPR029063">
    <property type="entry name" value="SAM-dependent_MTases_sf"/>
</dbReference>
<dbReference type="InterPro" id="IPR001045">
    <property type="entry name" value="Spermi_synthase"/>
</dbReference>
<dbReference type="InterPro" id="IPR035246">
    <property type="entry name" value="Spermidine_synt_N"/>
</dbReference>
<dbReference type="InterPro" id="IPR037163">
    <property type="entry name" value="Spermidine_synt_N_sf"/>
</dbReference>
<dbReference type="NCBIfam" id="NF002010">
    <property type="entry name" value="PRK00811.1"/>
    <property type="match status" value="1"/>
</dbReference>
<dbReference type="NCBIfam" id="TIGR00417">
    <property type="entry name" value="speE"/>
    <property type="match status" value="1"/>
</dbReference>
<dbReference type="PANTHER" id="PTHR11558:SF11">
    <property type="entry name" value="SPERMIDINE SYNTHASE"/>
    <property type="match status" value="1"/>
</dbReference>
<dbReference type="PANTHER" id="PTHR11558">
    <property type="entry name" value="SPERMIDINE/SPERMINE SYNTHASE"/>
    <property type="match status" value="1"/>
</dbReference>
<dbReference type="Pfam" id="PF17284">
    <property type="entry name" value="Spermine_synt_N"/>
    <property type="match status" value="1"/>
</dbReference>
<dbReference type="Pfam" id="PF01564">
    <property type="entry name" value="Spermine_synth"/>
    <property type="match status" value="1"/>
</dbReference>
<dbReference type="SUPFAM" id="SSF53335">
    <property type="entry name" value="S-adenosyl-L-methionine-dependent methyltransferases"/>
    <property type="match status" value="1"/>
</dbReference>
<dbReference type="PROSITE" id="PS51006">
    <property type="entry name" value="PABS_2"/>
    <property type="match status" value="1"/>
</dbReference>
<comment type="function">
    <text evidence="1">Catalyzes the irreversible transfer of a propylamine group from the amino donor S-adenosylmethioninamine (decarboxy-AdoMet) to putrescine (1,4-diaminobutane) to yield spermidine.</text>
</comment>
<comment type="catalytic activity">
    <reaction evidence="1">
        <text>S-adenosyl 3-(methylsulfanyl)propylamine + putrescine = S-methyl-5'-thioadenosine + spermidine + H(+)</text>
        <dbReference type="Rhea" id="RHEA:12721"/>
        <dbReference type="ChEBI" id="CHEBI:15378"/>
        <dbReference type="ChEBI" id="CHEBI:17509"/>
        <dbReference type="ChEBI" id="CHEBI:57443"/>
        <dbReference type="ChEBI" id="CHEBI:57834"/>
        <dbReference type="ChEBI" id="CHEBI:326268"/>
        <dbReference type="EC" id="2.5.1.16"/>
    </reaction>
</comment>
<comment type="pathway">
    <text evidence="1">Amine and polyamine biosynthesis; spermidine biosynthesis; spermidine from putrescine: step 1/1.</text>
</comment>
<comment type="subunit">
    <text evidence="1">Homodimer or homotetramer.</text>
</comment>
<comment type="subcellular location">
    <subcellularLocation>
        <location evidence="1">Cytoplasm</location>
    </subcellularLocation>
</comment>
<comment type="similarity">
    <text evidence="1">Belongs to the spermidine/spermine synthase family.</text>
</comment>
<keyword id="KW-0963">Cytoplasm</keyword>
<keyword id="KW-0620">Polyamine biosynthesis</keyword>
<keyword id="KW-1185">Reference proteome</keyword>
<keyword id="KW-0745">Spermidine biosynthesis</keyword>
<keyword id="KW-0808">Transferase</keyword>
<proteinExistence type="inferred from homology"/>
<accession>B9DUY3</accession>
<organism>
    <name type="scientific">Streptococcus uberis (strain ATCC BAA-854 / 0140J)</name>
    <dbReference type="NCBI Taxonomy" id="218495"/>
    <lineage>
        <taxon>Bacteria</taxon>
        <taxon>Bacillati</taxon>
        <taxon>Bacillota</taxon>
        <taxon>Bacilli</taxon>
        <taxon>Lactobacillales</taxon>
        <taxon>Streptococcaceae</taxon>
        <taxon>Streptococcus</taxon>
    </lineage>
</organism>